<dbReference type="EC" id="4.1.1.39" evidence="1"/>
<dbReference type="EMBL" id="AP002983">
    <property type="protein sequence ID" value="BAB33178.1"/>
    <property type="molecule type" value="Genomic_DNA"/>
</dbReference>
<dbReference type="RefSeq" id="NP_084780.1">
    <property type="nucleotide sequence ID" value="NC_002694.1"/>
</dbReference>
<dbReference type="SMR" id="Q9BBU1"/>
<dbReference type="GeneID" id="802906"/>
<dbReference type="OMA" id="HADPDEM"/>
<dbReference type="GO" id="GO:0009507">
    <property type="term" value="C:chloroplast"/>
    <property type="evidence" value="ECO:0007669"/>
    <property type="project" value="UniProtKB-SubCell"/>
</dbReference>
<dbReference type="GO" id="GO:0000287">
    <property type="term" value="F:magnesium ion binding"/>
    <property type="evidence" value="ECO:0007669"/>
    <property type="project" value="UniProtKB-UniRule"/>
</dbReference>
<dbReference type="GO" id="GO:0004497">
    <property type="term" value="F:monooxygenase activity"/>
    <property type="evidence" value="ECO:0007669"/>
    <property type="project" value="UniProtKB-KW"/>
</dbReference>
<dbReference type="GO" id="GO:0016984">
    <property type="term" value="F:ribulose-bisphosphate carboxylase activity"/>
    <property type="evidence" value="ECO:0007669"/>
    <property type="project" value="UniProtKB-UniRule"/>
</dbReference>
<dbReference type="GO" id="GO:0009853">
    <property type="term" value="P:photorespiration"/>
    <property type="evidence" value="ECO:0007669"/>
    <property type="project" value="UniProtKB-KW"/>
</dbReference>
<dbReference type="GO" id="GO:0019253">
    <property type="term" value="P:reductive pentose-phosphate cycle"/>
    <property type="evidence" value="ECO:0007669"/>
    <property type="project" value="UniProtKB-UniRule"/>
</dbReference>
<dbReference type="CDD" id="cd08212">
    <property type="entry name" value="RuBisCO_large_I"/>
    <property type="match status" value="1"/>
</dbReference>
<dbReference type="FunFam" id="3.20.20.110:FF:000001">
    <property type="entry name" value="Ribulose bisphosphate carboxylase large chain"/>
    <property type="match status" value="1"/>
</dbReference>
<dbReference type="FunFam" id="3.30.70.150:FF:000001">
    <property type="entry name" value="Ribulose bisphosphate carboxylase large chain"/>
    <property type="match status" value="1"/>
</dbReference>
<dbReference type="Gene3D" id="3.20.20.110">
    <property type="entry name" value="Ribulose bisphosphate carboxylase, large subunit, C-terminal domain"/>
    <property type="match status" value="1"/>
</dbReference>
<dbReference type="Gene3D" id="3.30.70.150">
    <property type="entry name" value="RuBisCO large subunit, N-terminal domain"/>
    <property type="match status" value="1"/>
</dbReference>
<dbReference type="HAMAP" id="MF_01338">
    <property type="entry name" value="RuBisCO_L_type1"/>
    <property type="match status" value="1"/>
</dbReference>
<dbReference type="InterPro" id="IPR033966">
    <property type="entry name" value="RuBisCO"/>
</dbReference>
<dbReference type="InterPro" id="IPR020878">
    <property type="entry name" value="RuBisCo_large_chain_AS"/>
</dbReference>
<dbReference type="InterPro" id="IPR000685">
    <property type="entry name" value="RuBisCO_lsu_C"/>
</dbReference>
<dbReference type="InterPro" id="IPR036376">
    <property type="entry name" value="RuBisCO_lsu_C_sf"/>
</dbReference>
<dbReference type="InterPro" id="IPR017443">
    <property type="entry name" value="RuBisCO_lsu_fd_N"/>
</dbReference>
<dbReference type="InterPro" id="IPR036422">
    <property type="entry name" value="RuBisCO_lsu_N_sf"/>
</dbReference>
<dbReference type="InterPro" id="IPR020888">
    <property type="entry name" value="RuBisCO_lsuI"/>
</dbReference>
<dbReference type="NCBIfam" id="NF003252">
    <property type="entry name" value="PRK04208.1"/>
    <property type="match status" value="1"/>
</dbReference>
<dbReference type="PANTHER" id="PTHR42704">
    <property type="entry name" value="RIBULOSE BISPHOSPHATE CARBOXYLASE"/>
    <property type="match status" value="1"/>
</dbReference>
<dbReference type="PANTHER" id="PTHR42704:SF16">
    <property type="entry name" value="RIBULOSE BISPHOSPHATE CARBOXYLASE LARGE CHAIN"/>
    <property type="match status" value="1"/>
</dbReference>
<dbReference type="Pfam" id="PF00016">
    <property type="entry name" value="RuBisCO_large"/>
    <property type="match status" value="1"/>
</dbReference>
<dbReference type="Pfam" id="PF02788">
    <property type="entry name" value="RuBisCO_large_N"/>
    <property type="match status" value="1"/>
</dbReference>
<dbReference type="SFLD" id="SFLDG01052">
    <property type="entry name" value="RuBisCO"/>
    <property type="match status" value="1"/>
</dbReference>
<dbReference type="SFLD" id="SFLDS00014">
    <property type="entry name" value="RuBisCO"/>
    <property type="match status" value="1"/>
</dbReference>
<dbReference type="SFLD" id="SFLDG00301">
    <property type="entry name" value="RuBisCO-like_proteins"/>
    <property type="match status" value="1"/>
</dbReference>
<dbReference type="SUPFAM" id="SSF51649">
    <property type="entry name" value="RuBisCo, C-terminal domain"/>
    <property type="match status" value="1"/>
</dbReference>
<dbReference type="SUPFAM" id="SSF54966">
    <property type="entry name" value="RuBisCO, large subunit, small (N-terminal) domain"/>
    <property type="match status" value="1"/>
</dbReference>
<dbReference type="PROSITE" id="PS00157">
    <property type="entry name" value="RUBISCO_LARGE"/>
    <property type="match status" value="1"/>
</dbReference>
<protein>
    <recommendedName>
        <fullName evidence="1">Ribulose bisphosphate carboxylase large chain</fullName>
        <shortName evidence="1">RuBisCO large subunit</shortName>
        <ecNumber evidence="1">4.1.1.39</ecNumber>
    </recommendedName>
</protein>
<keyword id="KW-0007">Acetylation</keyword>
<keyword id="KW-0113">Calvin cycle</keyword>
<keyword id="KW-0120">Carbon dioxide fixation</keyword>
<keyword id="KW-0150">Chloroplast</keyword>
<keyword id="KW-1015">Disulfide bond</keyword>
<keyword id="KW-0456">Lyase</keyword>
<keyword id="KW-0460">Magnesium</keyword>
<keyword id="KW-0479">Metal-binding</keyword>
<keyword id="KW-0488">Methylation</keyword>
<keyword id="KW-0503">Monooxygenase</keyword>
<keyword id="KW-0560">Oxidoreductase</keyword>
<keyword id="KW-0601">Photorespiration</keyword>
<keyword id="KW-0602">Photosynthesis</keyword>
<keyword id="KW-0934">Plastid</keyword>
<feature type="propeptide" id="PRO_0000031283" evidence="1">
    <location>
        <begin position="1"/>
        <end position="2"/>
    </location>
</feature>
<feature type="chain" id="PRO_0000031284" description="Ribulose bisphosphate carboxylase large chain">
    <location>
        <begin position="3"/>
        <end position="475"/>
    </location>
</feature>
<feature type="active site" description="Proton acceptor" evidence="1">
    <location>
        <position position="175"/>
    </location>
</feature>
<feature type="active site" description="Proton acceptor" evidence="1">
    <location>
        <position position="294"/>
    </location>
</feature>
<feature type="binding site" description="in homodimeric partner" evidence="1">
    <location>
        <position position="123"/>
    </location>
    <ligand>
        <name>substrate</name>
    </ligand>
</feature>
<feature type="binding site" evidence="1">
    <location>
        <position position="173"/>
    </location>
    <ligand>
        <name>substrate</name>
    </ligand>
</feature>
<feature type="binding site" evidence="1">
    <location>
        <position position="177"/>
    </location>
    <ligand>
        <name>substrate</name>
    </ligand>
</feature>
<feature type="binding site" description="via carbamate group" evidence="1">
    <location>
        <position position="201"/>
    </location>
    <ligand>
        <name>Mg(2+)</name>
        <dbReference type="ChEBI" id="CHEBI:18420"/>
    </ligand>
</feature>
<feature type="binding site" evidence="1">
    <location>
        <position position="203"/>
    </location>
    <ligand>
        <name>Mg(2+)</name>
        <dbReference type="ChEBI" id="CHEBI:18420"/>
    </ligand>
</feature>
<feature type="binding site" evidence="1">
    <location>
        <position position="204"/>
    </location>
    <ligand>
        <name>Mg(2+)</name>
        <dbReference type="ChEBI" id="CHEBI:18420"/>
    </ligand>
</feature>
<feature type="binding site" evidence="1">
    <location>
        <position position="295"/>
    </location>
    <ligand>
        <name>substrate</name>
    </ligand>
</feature>
<feature type="binding site" evidence="1">
    <location>
        <position position="327"/>
    </location>
    <ligand>
        <name>substrate</name>
    </ligand>
</feature>
<feature type="binding site" evidence="1">
    <location>
        <position position="379"/>
    </location>
    <ligand>
        <name>substrate</name>
    </ligand>
</feature>
<feature type="site" description="Transition state stabilizer" evidence="1">
    <location>
        <position position="334"/>
    </location>
</feature>
<feature type="modified residue" description="N-acetylproline" evidence="1">
    <location>
        <position position="3"/>
    </location>
</feature>
<feature type="modified residue" description="N6,N6,N6-trimethyllysine" evidence="1">
    <location>
        <position position="14"/>
    </location>
</feature>
<feature type="modified residue" description="N6-carboxylysine" evidence="1">
    <location>
        <position position="201"/>
    </location>
</feature>
<feature type="disulfide bond" description="Interchain; in linked form" evidence="1">
    <location>
        <position position="247"/>
    </location>
</feature>
<reference key="1">
    <citation type="journal article" date="2000" name="DNA Res.">
        <title>Complete structure of the chloroplast genome of a legume, Lotus japonicus.</title>
        <authorList>
            <person name="Kato T."/>
            <person name="Kaneko T."/>
            <person name="Sato S."/>
            <person name="Nakamura Y."/>
            <person name="Tabata S."/>
        </authorList>
    </citation>
    <scope>NUCLEOTIDE SEQUENCE [LARGE SCALE GENOMIC DNA]</scope>
    <source>
        <strain>cv. Miyakojima MG-20</strain>
    </source>
</reference>
<evidence type="ECO:0000255" key="1">
    <source>
        <dbReference type="HAMAP-Rule" id="MF_01338"/>
    </source>
</evidence>
<name>RBL_LOTJA</name>
<geneLocation type="chloroplast"/>
<gene>
    <name evidence="1" type="primary">rbcL</name>
</gene>
<accession>Q9BBU1</accession>
<proteinExistence type="inferred from homology"/>
<comment type="function">
    <text evidence="1">RuBisCO catalyzes two reactions: the carboxylation of D-ribulose 1,5-bisphosphate, the primary event in carbon dioxide fixation, as well as the oxidative fragmentation of the pentose substrate in the photorespiration process. Both reactions occur simultaneously and in competition at the same active site.</text>
</comment>
<comment type="catalytic activity">
    <reaction evidence="1">
        <text>2 (2R)-3-phosphoglycerate + 2 H(+) = D-ribulose 1,5-bisphosphate + CO2 + H2O</text>
        <dbReference type="Rhea" id="RHEA:23124"/>
        <dbReference type="ChEBI" id="CHEBI:15377"/>
        <dbReference type="ChEBI" id="CHEBI:15378"/>
        <dbReference type="ChEBI" id="CHEBI:16526"/>
        <dbReference type="ChEBI" id="CHEBI:57870"/>
        <dbReference type="ChEBI" id="CHEBI:58272"/>
        <dbReference type="EC" id="4.1.1.39"/>
    </reaction>
</comment>
<comment type="catalytic activity">
    <reaction evidence="1">
        <text>D-ribulose 1,5-bisphosphate + O2 = 2-phosphoglycolate + (2R)-3-phosphoglycerate + 2 H(+)</text>
        <dbReference type="Rhea" id="RHEA:36631"/>
        <dbReference type="ChEBI" id="CHEBI:15378"/>
        <dbReference type="ChEBI" id="CHEBI:15379"/>
        <dbReference type="ChEBI" id="CHEBI:57870"/>
        <dbReference type="ChEBI" id="CHEBI:58033"/>
        <dbReference type="ChEBI" id="CHEBI:58272"/>
    </reaction>
</comment>
<comment type="cofactor">
    <cofactor evidence="1">
        <name>Mg(2+)</name>
        <dbReference type="ChEBI" id="CHEBI:18420"/>
    </cofactor>
    <text evidence="1">Binds 1 Mg(2+) ion per subunit.</text>
</comment>
<comment type="subunit">
    <text evidence="1">Heterohexadecamer of 8 large chains and 8 small chains; disulfide-linked. The disulfide link is formed within the large subunit homodimers.</text>
</comment>
<comment type="subcellular location">
    <subcellularLocation>
        <location>Plastid</location>
        <location>Chloroplast</location>
    </subcellularLocation>
</comment>
<comment type="PTM">
    <text evidence="1">The disulfide bond which can form in the large chain dimeric partners within the hexadecamer appears to be associated with oxidative stress and protein turnover.</text>
</comment>
<comment type="miscellaneous">
    <text evidence="1">The basic functional RuBisCO is composed of a large chain homodimer in a 'head-to-tail' conformation. In form I RuBisCO this homodimer is arranged in a barrel-like tetramer with the small subunits forming a tetrameric 'cap' on each end of the 'barrel'.</text>
</comment>
<comment type="similarity">
    <text evidence="1">Belongs to the RuBisCO large chain family. Type I subfamily.</text>
</comment>
<sequence>MSPQTETKASVGFKAGVKDYKLTYYTPDYETKDTDILAAFRVTPQPGVPPEEAGAAVAAESSTGTWTTVWTDGLTSLDRYKGRCYHIEPVPGEESQFIAYVAYPLDLFEEGSVTNMFTSIVGNVFGFKALRALRLEDLRIPNAYVKTFQGPPHGIQVERDKLNKYGRPLLGCTIKPKLGLSAKNYGRAVYECLRGGLDFTKDDENVNSQPFMRWRDRFLFCAEALFKAQEETGEIKGHYLNATAGTCEEMMKRAVFARELGVPIVMHDYLTGGFTANTTLAHYCRDNGLLLHIHRAMHAVIDRQKNHGMHFRVLAKALRMSGGDHIHAGTVVGKLEGEREITLGFVDLLRDDFVEKDRSRGIYFTQDWVSLPGVLPVASGGIHVWHMPALTEIFGDDSVLQFGGGTLGHPWGNAPGAVANRVALEACVQARNEGRDLAREGNEIIREASKWSPELAAACEIWKEIKFEFQAMDTL</sequence>
<organism>
    <name type="scientific">Lotus japonicus</name>
    <name type="common">Lotus corniculatus var. japonicus</name>
    <dbReference type="NCBI Taxonomy" id="34305"/>
    <lineage>
        <taxon>Eukaryota</taxon>
        <taxon>Viridiplantae</taxon>
        <taxon>Streptophyta</taxon>
        <taxon>Embryophyta</taxon>
        <taxon>Tracheophyta</taxon>
        <taxon>Spermatophyta</taxon>
        <taxon>Magnoliopsida</taxon>
        <taxon>eudicotyledons</taxon>
        <taxon>Gunneridae</taxon>
        <taxon>Pentapetalae</taxon>
        <taxon>rosids</taxon>
        <taxon>fabids</taxon>
        <taxon>Fabales</taxon>
        <taxon>Fabaceae</taxon>
        <taxon>Papilionoideae</taxon>
        <taxon>50 kb inversion clade</taxon>
        <taxon>NPAAA clade</taxon>
        <taxon>Hologalegina</taxon>
        <taxon>robinioid clade</taxon>
        <taxon>Loteae</taxon>
        <taxon>Lotus</taxon>
    </lineage>
</organism>